<reference key="1">
    <citation type="journal article" date="2009" name="J. Bacteriol.">
        <title>Genome sequence of the probiotic bacterium Bifidobacterium animalis subsp. lactis AD011.</title>
        <authorList>
            <person name="Kim J.F."/>
            <person name="Jeong H."/>
            <person name="Yu D.S."/>
            <person name="Choi S.-H."/>
            <person name="Hur C.-G."/>
            <person name="Park M.-S."/>
            <person name="Yoon S.H."/>
            <person name="Kim D.-W."/>
            <person name="Ji G.E."/>
            <person name="Park H.-S."/>
            <person name="Oh T.K."/>
        </authorList>
    </citation>
    <scope>NUCLEOTIDE SEQUENCE [LARGE SCALE GENOMIC DNA]</scope>
    <source>
        <strain>AD011</strain>
    </source>
</reference>
<gene>
    <name evidence="1" type="primary">araA</name>
    <name type="ordered locus">BLA_0058</name>
</gene>
<organism>
    <name type="scientific">Bifidobacterium animalis subsp. lactis (strain AD011)</name>
    <dbReference type="NCBI Taxonomy" id="442563"/>
    <lineage>
        <taxon>Bacteria</taxon>
        <taxon>Bacillati</taxon>
        <taxon>Actinomycetota</taxon>
        <taxon>Actinomycetes</taxon>
        <taxon>Bifidobacteriales</taxon>
        <taxon>Bifidobacteriaceae</taxon>
        <taxon>Bifidobacterium</taxon>
    </lineage>
</organism>
<keyword id="KW-0054">Arabinose catabolism</keyword>
<keyword id="KW-0119">Carbohydrate metabolism</keyword>
<keyword id="KW-0413">Isomerase</keyword>
<keyword id="KW-0464">Manganese</keyword>
<keyword id="KW-0479">Metal-binding</keyword>
<keyword id="KW-1185">Reference proteome</keyword>
<feature type="chain" id="PRO_1000146224" description="L-arabinose isomerase">
    <location>
        <begin position="1"/>
        <end position="505"/>
    </location>
</feature>
<feature type="binding site" evidence="1">
    <location>
        <position position="308"/>
    </location>
    <ligand>
        <name>Mn(2+)</name>
        <dbReference type="ChEBI" id="CHEBI:29035"/>
    </ligand>
</feature>
<feature type="binding site" evidence="1">
    <location>
        <position position="335"/>
    </location>
    <ligand>
        <name>Mn(2+)</name>
        <dbReference type="ChEBI" id="CHEBI:29035"/>
    </ligand>
</feature>
<feature type="binding site" evidence="1">
    <location>
        <position position="352"/>
    </location>
    <ligand>
        <name>Mn(2+)</name>
        <dbReference type="ChEBI" id="CHEBI:29035"/>
    </ligand>
</feature>
<feature type="binding site" evidence="1">
    <location>
        <position position="453"/>
    </location>
    <ligand>
        <name>Mn(2+)</name>
        <dbReference type="ChEBI" id="CHEBI:29035"/>
    </ligand>
</feature>
<accession>B8DV60</accession>
<name>ARAA_BIFA0</name>
<sequence>MAMENPFEGKEIWFGVGSQDLYGEEALRQVAQQSAEIVDSLNASGRIPVKLVLKPTLKSSDGVRRFMVDASADDSCIGVITWMHTFSPAKMWIRGLEALRKPLLQLNTQHHFEIPWETIDMDFMNLNQAAHGDREYGYIVTRLGIPRKIVVGHYTDPAVADKIGVWARACAGWQASNTMNVMRWGDNMRNVAVTEGDKTEAERVFGASINTWAVNELVAAYDAVKENQIKDLIEDYKAKYEIAPELLDKDYDSLFIAAREECAMVNMMRANGCTAGVDNFEDLGALPQLPGVGPQRFPSEYGWGFSAEGDWKTAVLVRIGAVMGYGLEGGASLMEDYSYNFTPGNEMIMGSHMLEVSPSVGTIAKPRLEIHPLGIGGKADPVRLVFTVAPKKDAVVVSLADVRTRFRMLMNVVDVVEPLGSLDKLPCARALWKPEPNLEISAECWLRAGGSHHTCMTTSVGREAWEDFARIAGVELAAIDAETTPREFERELEIEDVFHELANRH</sequence>
<comment type="function">
    <text evidence="1">Catalyzes the conversion of L-arabinose to L-ribulose.</text>
</comment>
<comment type="catalytic activity">
    <reaction evidence="1">
        <text>beta-L-arabinopyranose = L-ribulose</text>
        <dbReference type="Rhea" id="RHEA:14821"/>
        <dbReference type="ChEBI" id="CHEBI:16880"/>
        <dbReference type="ChEBI" id="CHEBI:40886"/>
        <dbReference type="EC" id="5.3.1.4"/>
    </reaction>
</comment>
<comment type="cofactor">
    <cofactor evidence="1">
        <name>Mn(2+)</name>
        <dbReference type="ChEBI" id="CHEBI:29035"/>
    </cofactor>
    <text evidence="1">Binds 1 Mn(2+) ion per subunit.</text>
</comment>
<comment type="pathway">
    <text evidence="1">Carbohydrate degradation; L-arabinose degradation via L-ribulose; D-xylulose 5-phosphate from L-arabinose (bacterial route): step 1/3.</text>
</comment>
<comment type="similarity">
    <text evidence="1">Belongs to the arabinose isomerase family.</text>
</comment>
<protein>
    <recommendedName>
        <fullName evidence="1">L-arabinose isomerase</fullName>
        <ecNumber evidence="1">5.3.1.4</ecNumber>
    </recommendedName>
</protein>
<dbReference type="EC" id="5.3.1.4" evidence="1"/>
<dbReference type="EMBL" id="CP001213">
    <property type="protein sequence ID" value="ACL28361.1"/>
    <property type="molecule type" value="Genomic_DNA"/>
</dbReference>
<dbReference type="RefSeq" id="WP_004219339.1">
    <property type="nucleotide sequence ID" value="NC_011835.1"/>
</dbReference>
<dbReference type="SMR" id="B8DV60"/>
<dbReference type="STRING" id="442563.BLA_0058"/>
<dbReference type="GeneID" id="29695494"/>
<dbReference type="KEGG" id="bla:BLA_0058"/>
<dbReference type="HOGENOM" id="CLU_045663_0_0_11"/>
<dbReference type="UniPathway" id="UPA00145">
    <property type="reaction ID" value="UER00565"/>
</dbReference>
<dbReference type="Proteomes" id="UP000002456">
    <property type="component" value="Chromosome"/>
</dbReference>
<dbReference type="GO" id="GO:0005829">
    <property type="term" value="C:cytosol"/>
    <property type="evidence" value="ECO:0007669"/>
    <property type="project" value="TreeGrafter"/>
</dbReference>
<dbReference type="GO" id="GO:0008733">
    <property type="term" value="F:L-arabinose isomerase activity"/>
    <property type="evidence" value="ECO:0007669"/>
    <property type="project" value="UniProtKB-UniRule"/>
</dbReference>
<dbReference type="GO" id="GO:0030145">
    <property type="term" value="F:manganese ion binding"/>
    <property type="evidence" value="ECO:0007669"/>
    <property type="project" value="UniProtKB-UniRule"/>
</dbReference>
<dbReference type="GO" id="GO:0019569">
    <property type="term" value="P:L-arabinose catabolic process to xylulose 5-phosphate"/>
    <property type="evidence" value="ECO:0007669"/>
    <property type="project" value="UniProtKB-UniRule"/>
</dbReference>
<dbReference type="Gene3D" id="3.40.50.10940">
    <property type="match status" value="1"/>
</dbReference>
<dbReference type="HAMAP" id="MF_00519">
    <property type="entry name" value="Arabinose_Isome"/>
    <property type="match status" value="1"/>
</dbReference>
<dbReference type="InterPro" id="IPR024664">
    <property type="entry name" value="Ara_Isoase_C"/>
</dbReference>
<dbReference type="InterPro" id="IPR055390">
    <property type="entry name" value="AraA_central"/>
</dbReference>
<dbReference type="InterPro" id="IPR055389">
    <property type="entry name" value="AraA_N"/>
</dbReference>
<dbReference type="InterPro" id="IPR038583">
    <property type="entry name" value="AraA_N_sf"/>
</dbReference>
<dbReference type="InterPro" id="IPR004216">
    <property type="entry name" value="Fuc/Ara_isomerase_C"/>
</dbReference>
<dbReference type="InterPro" id="IPR009015">
    <property type="entry name" value="Fucose_isomerase_N/cen_sf"/>
</dbReference>
<dbReference type="InterPro" id="IPR003762">
    <property type="entry name" value="Lara_isomerase"/>
</dbReference>
<dbReference type="NCBIfam" id="NF002795">
    <property type="entry name" value="PRK02929.1"/>
    <property type="match status" value="1"/>
</dbReference>
<dbReference type="PANTHER" id="PTHR38464">
    <property type="entry name" value="L-ARABINOSE ISOMERASE"/>
    <property type="match status" value="1"/>
</dbReference>
<dbReference type="PANTHER" id="PTHR38464:SF1">
    <property type="entry name" value="L-ARABINOSE ISOMERASE"/>
    <property type="match status" value="1"/>
</dbReference>
<dbReference type="Pfam" id="PF24856">
    <property type="entry name" value="AraA_central"/>
    <property type="match status" value="1"/>
</dbReference>
<dbReference type="Pfam" id="PF02610">
    <property type="entry name" value="AraA_N"/>
    <property type="match status" value="1"/>
</dbReference>
<dbReference type="Pfam" id="PF11762">
    <property type="entry name" value="Arabinose_Iso_C"/>
    <property type="match status" value="1"/>
</dbReference>
<dbReference type="PIRSF" id="PIRSF001478">
    <property type="entry name" value="L-ara_isomerase"/>
    <property type="match status" value="1"/>
</dbReference>
<dbReference type="SUPFAM" id="SSF50443">
    <property type="entry name" value="FucI/AraA C-terminal domain-like"/>
    <property type="match status" value="1"/>
</dbReference>
<dbReference type="SUPFAM" id="SSF53743">
    <property type="entry name" value="FucI/AraA N-terminal and middle domains"/>
    <property type="match status" value="1"/>
</dbReference>
<evidence type="ECO:0000255" key="1">
    <source>
        <dbReference type="HAMAP-Rule" id="MF_00519"/>
    </source>
</evidence>
<proteinExistence type="inferred from homology"/>